<accession>B1LIM9</accession>
<evidence type="ECO:0000255" key="1">
    <source>
        <dbReference type="HAMAP-Rule" id="MF_01687"/>
    </source>
</evidence>
<organism>
    <name type="scientific">Escherichia coli (strain SMS-3-5 / SECEC)</name>
    <dbReference type="NCBI Taxonomy" id="439855"/>
    <lineage>
        <taxon>Bacteria</taxon>
        <taxon>Pseudomonadati</taxon>
        <taxon>Pseudomonadota</taxon>
        <taxon>Gammaproteobacteria</taxon>
        <taxon>Enterobacterales</taxon>
        <taxon>Enterobacteriaceae</taxon>
        <taxon>Escherichia</taxon>
    </lineage>
</organism>
<gene>
    <name evidence="1" type="primary">lacZ</name>
    <name type="ordered locus">EcSMS35_0375</name>
</gene>
<protein>
    <recommendedName>
        <fullName evidence="1">Beta-galactosidase</fullName>
        <shortName evidence="1">Beta-gal</shortName>
        <ecNumber evidence="1">3.2.1.23</ecNumber>
    </recommendedName>
    <alternativeName>
        <fullName evidence="1">Lactase</fullName>
    </alternativeName>
</protein>
<proteinExistence type="inferred from homology"/>
<name>BGAL_ECOSM</name>
<dbReference type="EC" id="3.2.1.23" evidence="1"/>
<dbReference type="EMBL" id="CP000970">
    <property type="protein sequence ID" value="ACB17296.1"/>
    <property type="molecule type" value="Genomic_DNA"/>
</dbReference>
<dbReference type="RefSeq" id="WP_000177857.1">
    <property type="nucleotide sequence ID" value="NC_010498.1"/>
</dbReference>
<dbReference type="SMR" id="B1LIM9"/>
<dbReference type="CAZy" id="GH2">
    <property type="family name" value="Glycoside Hydrolase Family 2"/>
</dbReference>
<dbReference type="KEGG" id="ecm:EcSMS35_0375"/>
<dbReference type="HOGENOM" id="CLU_002346_0_2_6"/>
<dbReference type="Proteomes" id="UP000007011">
    <property type="component" value="Chromosome"/>
</dbReference>
<dbReference type="GO" id="GO:0009341">
    <property type="term" value="C:beta-galactosidase complex"/>
    <property type="evidence" value="ECO:0007669"/>
    <property type="project" value="InterPro"/>
</dbReference>
<dbReference type="GO" id="GO:0004565">
    <property type="term" value="F:beta-galactosidase activity"/>
    <property type="evidence" value="ECO:0007669"/>
    <property type="project" value="UniProtKB-EC"/>
</dbReference>
<dbReference type="GO" id="GO:0030246">
    <property type="term" value="F:carbohydrate binding"/>
    <property type="evidence" value="ECO:0007669"/>
    <property type="project" value="InterPro"/>
</dbReference>
<dbReference type="GO" id="GO:0000287">
    <property type="term" value="F:magnesium ion binding"/>
    <property type="evidence" value="ECO:0007669"/>
    <property type="project" value="UniProtKB-UniRule"/>
</dbReference>
<dbReference type="GO" id="GO:0005990">
    <property type="term" value="P:lactose catabolic process"/>
    <property type="evidence" value="ECO:0007669"/>
    <property type="project" value="TreeGrafter"/>
</dbReference>
<dbReference type="FunFam" id="2.60.120.260:FF:000058">
    <property type="entry name" value="Beta-galactosidase"/>
    <property type="match status" value="1"/>
</dbReference>
<dbReference type="FunFam" id="2.60.40.10:FF:000680">
    <property type="entry name" value="Beta-galactosidase"/>
    <property type="match status" value="1"/>
</dbReference>
<dbReference type="FunFam" id="2.60.40.10:FF:000850">
    <property type="entry name" value="Beta-galactosidase"/>
    <property type="match status" value="1"/>
</dbReference>
<dbReference type="FunFam" id="2.70.98.10:FF:000006">
    <property type="entry name" value="Beta-galactosidase"/>
    <property type="match status" value="1"/>
</dbReference>
<dbReference type="FunFam" id="3.20.20.80:FF:000018">
    <property type="entry name" value="Beta-galactosidase"/>
    <property type="match status" value="1"/>
</dbReference>
<dbReference type="Gene3D" id="2.70.98.10">
    <property type="match status" value="1"/>
</dbReference>
<dbReference type="Gene3D" id="2.60.120.260">
    <property type="entry name" value="Galactose-binding domain-like"/>
    <property type="match status" value="1"/>
</dbReference>
<dbReference type="Gene3D" id="3.20.20.80">
    <property type="entry name" value="Glycosidases"/>
    <property type="match status" value="1"/>
</dbReference>
<dbReference type="Gene3D" id="2.60.40.10">
    <property type="entry name" value="Immunoglobulins"/>
    <property type="match status" value="2"/>
</dbReference>
<dbReference type="HAMAP" id="MF_01687">
    <property type="entry name" value="Beta_gal"/>
    <property type="match status" value="1"/>
</dbReference>
<dbReference type="InterPro" id="IPR004199">
    <property type="entry name" value="B-gal_small/dom_5"/>
</dbReference>
<dbReference type="InterPro" id="IPR050347">
    <property type="entry name" value="Bact_Beta-galactosidase"/>
</dbReference>
<dbReference type="InterPro" id="IPR036156">
    <property type="entry name" value="Beta-gal/glucu_dom_sf"/>
</dbReference>
<dbReference type="InterPro" id="IPR011013">
    <property type="entry name" value="Gal_mutarotase_sf_dom"/>
</dbReference>
<dbReference type="InterPro" id="IPR008979">
    <property type="entry name" value="Galactose-bd-like_sf"/>
</dbReference>
<dbReference type="InterPro" id="IPR014718">
    <property type="entry name" value="GH-type_carb-bd"/>
</dbReference>
<dbReference type="InterPro" id="IPR006101">
    <property type="entry name" value="Glyco_hydro_2"/>
</dbReference>
<dbReference type="InterPro" id="IPR023232">
    <property type="entry name" value="Glyco_hydro_2_AS"/>
</dbReference>
<dbReference type="InterPro" id="IPR023933">
    <property type="entry name" value="Glyco_hydro_2_beta_Galsidase"/>
</dbReference>
<dbReference type="InterPro" id="IPR006103">
    <property type="entry name" value="Glyco_hydro_2_cat"/>
</dbReference>
<dbReference type="InterPro" id="IPR023230">
    <property type="entry name" value="Glyco_hydro_2_CS"/>
</dbReference>
<dbReference type="InterPro" id="IPR006102">
    <property type="entry name" value="Glyco_hydro_2_Ig-like"/>
</dbReference>
<dbReference type="InterPro" id="IPR006104">
    <property type="entry name" value="Glyco_hydro_2_N"/>
</dbReference>
<dbReference type="InterPro" id="IPR017853">
    <property type="entry name" value="Glycoside_hydrolase_SF"/>
</dbReference>
<dbReference type="InterPro" id="IPR013783">
    <property type="entry name" value="Ig-like_fold"/>
</dbReference>
<dbReference type="InterPro" id="IPR032312">
    <property type="entry name" value="LacZ_4"/>
</dbReference>
<dbReference type="NCBIfam" id="NF007074">
    <property type="entry name" value="PRK09525.1"/>
    <property type="match status" value="1"/>
</dbReference>
<dbReference type="PANTHER" id="PTHR46323">
    <property type="entry name" value="BETA-GALACTOSIDASE"/>
    <property type="match status" value="1"/>
</dbReference>
<dbReference type="PANTHER" id="PTHR46323:SF2">
    <property type="entry name" value="BETA-GALACTOSIDASE"/>
    <property type="match status" value="1"/>
</dbReference>
<dbReference type="Pfam" id="PF02929">
    <property type="entry name" value="Bgal_small_N"/>
    <property type="match status" value="1"/>
</dbReference>
<dbReference type="Pfam" id="PF00703">
    <property type="entry name" value="Glyco_hydro_2"/>
    <property type="match status" value="1"/>
</dbReference>
<dbReference type="Pfam" id="PF02836">
    <property type="entry name" value="Glyco_hydro_2_C"/>
    <property type="match status" value="1"/>
</dbReference>
<dbReference type="Pfam" id="PF02837">
    <property type="entry name" value="Glyco_hydro_2_N"/>
    <property type="match status" value="1"/>
</dbReference>
<dbReference type="Pfam" id="PF16353">
    <property type="entry name" value="LacZ_4"/>
    <property type="match status" value="1"/>
</dbReference>
<dbReference type="PRINTS" id="PR00132">
    <property type="entry name" value="GLHYDRLASE2"/>
</dbReference>
<dbReference type="SMART" id="SM01038">
    <property type="entry name" value="Bgal_small_N"/>
    <property type="match status" value="1"/>
</dbReference>
<dbReference type="SUPFAM" id="SSF51445">
    <property type="entry name" value="(Trans)glycosidases"/>
    <property type="match status" value="1"/>
</dbReference>
<dbReference type="SUPFAM" id="SSF49303">
    <property type="entry name" value="beta-Galactosidase/glucuronidase domain"/>
    <property type="match status" value="2"/>
</dbReference>
<dbReference type="SUPFAM" id="SSF74650">
    <property type="entry name" value="Galactose mutarotase-like"/>
    <property type="match status" value="1"/>
</dbReference>
<dbReference type="SUPFAM" id="SSF49785">
    <property type="entry name" value="Galactose-binding domain-like"/>
    <property type="match status" value="1"/>
</dbReference>
<dbReference type="PROSITE" id="PS00719">
    <property type="entry name" value="GLYCOSYL_HYDROL_F2_1"/>
    <property type="match status" value="1"/>
</dbReference>
<dbReference type="PROSITE" id="PS00608">
    <property type="entry name" value="GLYCOSYL_HYDROL_F2_2"/>
    <property type="match status" value="1"/>
</dbReference>
<reference key="1">
    <citation type="journal article" date="2008" name="J. Bacteriol.">
        <title>Insights into the environmental resistance gene pool from the genome sequence of the multidrug-resistant environmental isolate Escherichia coli SMS-3-5.</title>
        <authorList>
            <person name="Fricke W.F."/>
            <person name="Wright M.S."/>
            <person name="Lindell A.H."/>
            <person name="Harkins D.M."/>
            <person name="Baker-Austin C."/>
            <person name="Ravel J."/>
            <person name="Stepanauskas R."/>
        </authorList>
    </citation>
    <scope>NUCLEOTIDE SEQUENCE [LARGE SCALE GENOMIC DNA]</scope>
    <source>
        <strain>SMS-3-5 / SECEC</strain>
    </source>
</reference>
<keyword id="KW-0326">Glycosidase</keyword>
<keyword id="KW-0378">Hydrolase</keyword>
<keyword id="KW-0460">Magnesium</keyword>
<keyword id="KW-0479">Metal-binding</keyword>
<keyword id="KW-0915">Sodium</keyword>
<comment type="catalytic activity">
    <reaction evidence="1">
        <text>Hydrolysis of terminal non-reducing beta-D-galactose residues in beta-D-galactosides.</text>
        <dbReference type="EC" id="3.2.1.23"/>
    </reaction>
</comment>
<comment type="cofactor">
    <cofactor evidence="1">
        <name>Mg(2+)</name>
        <dbReference type="ChEBI" id="CHEBI:18420"/>
    </cofactor>
    <text evidence="1">Binds 2 magnesium ions per monomer.</text>
</comment>
<comment type="cofactor">
    <cofactor evidence="1">
        <name>Na(+)</name>
        <dbReference type="ChEBI" id="CHEBI:29101"/>
    </cofactor>
    <text evidence="1">Binds 1 sodium ion per monomer.</text>
</comment>
<comment type="subunit">
    <text evidence="1">Homotetramer.</text>
</comment>
<comment type="similarity">
    <text evidence="1">Belongs to the glycosyl hydrolase 2 family.</text>
</comment>
<sequence length="1024" mass="116542">MTMITDSLAVVLQRRDWENPGVTQLNRLAAHPHFASWRNSEEARTDRPSQQLRSLNGEWRFAWFPAPEAVPESWLDCDLPDADTVVVPSNWQMHGYDAPIYTNVTYPITVNPPFVPAENPTGCYSLTFNIDECWLQKGQTRIIFDGVNSAFHLWCNGRWVGYGQDSRLPSEFDLSAFLRAGKNRLAVMVLRWSDGSYLEDQDMWRMSGIFRDVSLLHKPTTQISDFHVATRFNDDFSRAVLEAEVQMCGELRDELRVTVSLWQGETQVASGTTPFGGEIIDERGGYADRVTLRLNVENPALWSAEIPNLYRAVVELHTADGTLIEAEACDVGFREVRIENGLLLLNGKPVLIRGVNRHEHHPLHGQVMDEQTMVQDILLMKQNNFNAVRCSHYPNHPLWYTLCDRYGLYVVDEANIETHGMVPMNRLTDDPRWLPAMSERVTRMVQRDRNHPSVIIWSLGNESGHGANHDALYRWIKSVDPSRPVQYEGGGADTTATDIICPMYARVDEDQPFPAVPKWSIKKWLSLPGELRPLILCEYAHAMGNSLGGFAKYWQAFRQYPRLQGGFVWDWVDQSLIKYDENGNPWSAYGGDFGDTPNDRQFCMNGLVFADRTPHPALTEAKHQQQFFQFRLSGRTIEVTSEYLFRHSDNELLHWSVALDGKPLASGEMPLDVAPQDKQLIELPELPQPESTGQLWLTVHVVQPNATAWSEAGHISAWQQWRLAENLSVALPSAPHAIPQLTTSEMDFCIELGNKRWQFNRQSGFLSQMWIGDEKQLLTPLRDQFIRAPLDNDIGVSEATRIDPNAWVERWKAAGHYQAEVALLQCTADILADAVLITTAHAWQHQGKTLFISRKTYRIDGSGQMAITVDVEVASDTPHPARIGLTCQLAQVAERVNWLGLGPQENYPDRLTAACFDRWDLPLSDMYTPYVFPSENGLRCGTRELNYGPHQWRGDFQFNISRYSQQQLMETSHRHLLHAEEGTWLNIDGFHMGIGGDDSWSPSVSAEFQLSAGRYHYQLVWCQK</sequence>
<feature type="chain" id="PRO_0000366990" description="Beta-galactosidase">
    <location>
        <begin position="1"/>
        <end position="1024"/>
    </location>
</feature>
<feature type="active site" description="Proton donor" evidence="1">
    <location>
        <position position="462"/>
    </location>
</feature>
<feature type="active site" description="Nucleophile" evidence="1">
    <location>
        <position position="538"/>
    </location>
</feature>
<feature type="binding site" evidence="1">
    <location>
        <position position="103"/>
    </location>
    <ligand>
        <name>substrate</name>
    </ligand>
</feature>
<feature type="binding site" evidence="1">
    <location>
        <position position="202"/>
    </location>
    <ligand>
        <name>Na(+)</name>
        <dbReference type="ChEBI" id="CHEBI:29101"/>
    </ligand>
</feature>
<feature type="binding site" evidence="1">
    <location>
        <position position="202"/>
    </location>
    <ligand>
        <name>substrate</name>
    </ligand>
</feature>
<feature type="binding site" evidence="1">
    <location>
        <position position="417"/>
    </location>
    <ligand>
        <name>Mg(2+)</name>
        <dbReference type="ChEBI" id="CHEBI:18420"/>
        <label>1</label>
    </ligand>
</feature>
<feature type="binding site" evidence="1">
    <location>
        <position position="419"/>
    </location>
    <ligand>
        <name>Mg(2+)</name>
        <dbReference type="ChEBI" id="CHEBI:18420"/>
        <label>1</label>
    </ligand>
</feature>
<feature type="binding site" evidence="1">
    <location>
        <position position="462"/>
    </location>
    <ligand>
        <name>Mg(2+)</name>
        <dbReference type="ChEBI" id="CHEBI:18420"/>
        <label>1</label>
    </ligand>
</feature>
<feature type="binding site" evidence="1">
    <location>
        <position position="462"/>
    </location>
    <ligand>
        <name>substrate</name>
    </ligand>
</feature>
<feature type="binding site" evidence="1">
    <location>
        <begin position="538"/>
        <end position="541"/>
    </location>
    <ligand>
        <name>substrate</name>
    </ligand>
</feature>
<feature type="binding site" evidence="1">
    <location>
        <position position="598"/>
    </location>
    <ligand>
        <name>Mg(2+)</name>
        <dbReference type="ChEBI" id="CHEBI:18420"/>
        <label>2</label>
    </ligand>
</feature>
<feature type="binding site" evidence="1">
    <location>
        <position position="602"/>
    </location>
    <ligand>
        <name>Na(+)</name>
        <dbReference type="ChEBI" id="CHEBI:29101"/>
    </ligand>
</feature>
<feature type="binding site" evidence="1">
    <location>
        <position position="605"/>
    </location>
    <ligand>
        <name>Na(+)</name>
        <dbReference type="ChEBI" id="CHEBI:29101"/>
    </ligand>
</feature>
<feature type="binding site" evidence="1">
    <location>
        <position position="605"/>
    </location>
    <ligand>
        <name>substrate</name>
    </ligand>
</feature>
<feature type="binding site" evidence="1">
    <location>
        <position position="1000"/>
    </location>
    <ligand>
        <name>substrate</name>
    </ligand>
</feature>
<feature type="site" description="Transition state stabilizer" evidence="1">
    <location>
        <position position="358"/>
    </location>
</feature>
<feature type="site" description="Transition state stabilizer" evidence="1">
    <location>
        <position position="392"/>
    </location>
</feature>